<evidence type="ECO:0000250" key="1">
    <source>
        <dbReference type="UniProtKB" id="Q6PER3"/>
    </source>
</evidence>
<evidence type="ECO:0000255" key="2">
    <source>
        <dbReference type="PROSITE-ProRule" id="PRU00044"/>
    </source>
</evidence>
<evidence type="ECO:0000255" key="3">
    <source>
        <dbReference type="PROSITE-ProRule" id="PRU00576"/>
    </source>
</evidence>
<evidence type="ECO:0000256" key="4">
    <source>
        <dbReference type="SAM" id="MobiDB-lite"/>
    </source>
</evidence>
<evidence type="ECO:0000269" key="5">
    <source>
    </source>
</evidence>
<evidence type="ECO:0000269" key="6">
    <source>
    </source>
</evidence>
<evidence type="ECO:0000269" key="7">
    <source>
    </source>
</evidence>
<evidence type="ECO:0000269" key="8">
    <source>
    </source>
</evidence>
<evidence type="ECO:0000269" key="9">
    <source>
    </source>
</evidence>
<evidence type="ECO:0000269" key="10">
    <source>
    </source>
</evidence>
<evidence type="ECO:0000269" key="11">
    <source>
    </source>
</evidence>
<evidence type="ECO:0000269" key="12">
    <source>
    </source>
</evidence>
<evidence type="ECO:0000269" key="13">
    <source>
    </source>
</evidence>
<evidence type="ECO:0000269" key="14">
    <source>
    </source>
</evidence>
<evidence type="ECO:0000303" key="15">
    <source>
    </source>
</evidence>
<evidence type="ECO:0000305" key="16"/>
<evidence type="ECO:0007744" key="17">
    <source>
    </source>
</evidence>
<evidence type="ECO:0007829" key="18">
    <source>
        <dbReference type="PDB" id="3CO1"/>
    </source>
</evidence>
<evidence type="ECO:0007829" key="19">
    <source>
        <dbReference type="PDB" id="3JAR"/>
    </source>
</evidence>
<evidence type="ECO:0007829" key="20">
    <source>
        <dbReference type="PDB" id="3TQ7"/>
    </source>
</evidence>
<feature type="chain" id="PRO_0000213428" description="Microtubule-associated protein RP/EB family member 3">
    <location>
        <begin position="1"/>
        <end position="281"/>
    </location>
</feature>
<feature type="domain" description="Calponin-homology (CH)" evidence="2">
    <location>
        <begin position="14"/>
        <end position="116"/>
    </location>
</feature>
<feature type="domain" description="EB1 C-terminal" evidence="3">
    <location>
        <begin position="194"/>
        <end position="264"/>
    </location>
</feature>
<feature type="region of interest" description="Disordered" evidence="4">
    <location>
        <begin position="157"/>
        <end position="181"/>
    </location>
</feature>
<feature type="region of interest" description="DCTN1-binding">
    <location>
        <begin position="217"/>
        <end position="281"/>
    </location>
</feature>
<feature type="region of interest" description="APC-binding">
    <location>
        <begin position="217"/>
        <end position="260"/>
    </location>
</feature>
<feature type="region of interest" description="Disordered" evidence="4">
    <location>
        <begin position="261"/>
        <end position="281"/>
    </location>
</feature>
<feature type="compositionally biased region" description="Polar residues" evidence="4">
    <location>
        <begin position="158"/>
        <end position="175"/>
    </location>
</feature>
<feature type="compositionally biased region" description="Basic and acidic residues" evidence="4">
    <location>
        <begin position="272"/>
        <end position="281"/>
    </location>
</feature>
<feature type="modified residue" description="Phosphoserine" evidence="17">
    <location>
        <position position="162"/>
    </location>
</feature>
<feature type="modified residue" description="Phosphoserine" evidence="1">
    <location>
        <position position="176"/>
    </location>
</feature>
<feature type="splice variant" id="VSP_012947" description="In isoform 2." evidence="15">
    <location>
        <begin position="142"/>
        <end position="156"/>
    </location>
</feature>
<feature type="mutagenesis site" description="Loss of localization of CAMSAP2 stretches to the Golgi apparatus; when associated with A-234." evidence="13">
    <original>Y</original>
    <variation>A</variation>
    <location>
        <position position="226"/>
    </location>
</feature>
<feature type="mutagenesis site" description="Loss of localization of CAMSAP2 stretches to the Golgi apparatus; when associated with A-226." evidence="13">
    <original>E</original>
    <variation>A</variation>
    <location>
        <position position="234"/>
    </location>
</feature>
<feature type="sequence conflict" description="In Ref. 7; CAA72060." evidence="16" ref="7">
    <original>A</original>
    <variation>P</variation>
    <location>
        <position position="2"/>
    </location>
</feature>
<feature type="sequence conflict" description="In Ref. 7; CAA72060." evidence="16" ref="7">
    <original>E</original>
    <variation>V</variation>
    <location>
        <position position="13"/>
    </location>
</feature>
<feature type="sequence conflict" description="In Ref. 7; CAA72060." evidence="16" ref="7">
    <original>D</original>
    <variation>G</variation>
    <location>
        <position position="123"/>
    </location>
</feature>
<feature type="sequence conflict" description="In Ref. 3; CAG38760." evidence="16" ref="3">
    <original>C</original>
    <variation>S</variation>
    <location>
        <position position="237"/>
    </location>
</feature>
<feature type="helix" evidence="18">
    <location>
        <begin position="17"/>
        <end position="28"/>
    </location>
</feature>
<feature type="helix" evidence="18">
    <location>
        <begin position="35"/>
        <end position="40"/>
    </location>
</feature>
<feature type="helix" evidence="18">
    <location>
        <begin position="42"/>
        <end position="51"/>
    </location>
</feature>
<feature type="strand" evidence="19">
    <location>
        <begin position="52"/>
        <end position="54"/>
    </location>
</feature>
<feature type="helix" evidence="18">
    <location>
        <begin position="58"/>
        <end position="60"/>
    </location>
</feature>
<feature type="helix" evidence="18">
    <location>
        <begin position="68"/>
        <end position="85"/>
    </location>
</feature>
<feature type="helix" evidence="18">
    <location>
        <begin position="93"/>
        <end position="97"/>
    </location>
</feature>
<feature type="helix" evidence="18">
    <location>
        <begin position="101"/>
        <end position="118"/>
    </location>
</feature>
<feature type="turn" evidence="18">
    <location>
        <begin position="126"/>
        <end position="129"/>
    </location>
</feature>
<feature type="helix" evidence="20">
    <location>
        <begin position="206"/>
        <end position="238"/>
    </location>
</feature>
<feature type="helix" evidence="20">
    <location>
        <begin position="247"/>
        <end position="255"/>
    </location>
</feature>
<organism>
    <name type="scientific">Homo sapiens</name>
    <name type="common">Human</name>
    <dbReference type="NCBI Taxonomy" id="9606"/>
    <lineage>
        <taxon>Eukaryota</taxon>
        <taxon>Metazoa</taxon>
        <taxon>Chordata</taxon>
        <taxon>Craniata</taxon>
        <taxon>Vertebrata</taxon>
        <taxon>Euteleostomi</taxon>
        <taxon>Mammalia</taxon>
        <taxon>Eutheria</taxon>
        <taxon>Euarchontoglires</taxon>
        <taxon>Primates</taxon>
        <taxon>Haplorrhini</taxon>
        <taxon>Catarrhini</taxon>
        <taxon>Hominidae</taxon>
        <taxon>Homo</taxon>
    </lineage>
</organism>
<name>MARE3_HUMAN</name>
<protein>
    <recommendedName>
        <fullName>Microtubule-associated protein RP/EB family member 3</fullName>
    </recommendedName>
    <alternativeName>
        <fullName>EB1 protein family member 3</fullName>
        <shortName>EBF3</shortName>
    </alternativeName>
    <alternativeName>
        <fullName>End-binding protein 3</fullName>
        <shortName>EB3</shortName>
    </alternativeName>
    <alternativeName>
        <fullName>RP3</fullName>
    </alternativeName>
</protein>
<dbReference type="EMBL" id="AB025186">
    <property type="protein sequence ID" value="BAA82958.1"/>
    <property type="molecule type" value="mRNA"/>
</dbReference>
<dbReference type="EMBL" id="AF288787">
    <property type="protein sequence ID" value="AAK07556.1"/>
    <property type="status" value="ALT_INIT"/>
    <property type="molecule type" value="Genomic_DNA"/>
</dbReference>
<dbReference type="EMBL" id="AF288787">
    <property type="protein sequence ID" value="AAK07557.1"/>
    <property type="status" value="ALT_INIT"/>
    <property type="molecule type" value="Genomic_DNA"/>
</dbReference>
<dbReference type="EMBL" id="CR536523">
    <property type="protein sequence ID" value="CAG38760.1"/>
    <property type="molecule type" value="mRNA"/>
</dbReference>
<dbReference type="EMBL" id="CR541845">
    <property type="protein sequence ID" value="CAG46643.1"/>
    <property type="molecule type" value="mRNA"/>
</dbReference>
<dbReference type="EMBL" id="AC013472">
    <property type="protein sequence ID" value="AAY14653.1"/>
    <property type="molecule type" value="Genomic_DNA"/>
</dbReference>
<dbReference type="EMBL" id="CH471053">
    <property type="protein sequence ID" value="EAX00660.1"/>
    <property type="molecule type" value="Genomic_DNA"/>
</dbReference>
<dbReference type="EMBL" id="CH471053">
    <property type="protein sequence ID" value="EAX00662.1"/>
    <property type="molecule type" value="Genomic_DNA"/>
</dbReference>
<dbReference type="EMBL" id="CH471053">
    <property type="protein sequence ID" value="EAX00663.1"/>
    <property type="molecule type" value="Genomic_DNA"/>
</dbReference>
<dbReference type="EMBL" id="CH471053">
    <property type="protein sequence ID" value="EAX00666.1"/>
    <property type="molecule type" value="Genomic_DNA"/>
</dbReference>
<dbReference type="EMBL" id="BC011557">
    <property type="protein sequence ID" value="AAH11557.1"/>
    <property type="molecule type" value="mRNA"/>
</dbReference>
<dbReference type="EMBL" id="Y11174">
    <property type="protein sequence ID" value="CAA72060.1"/>
    <property type="status" value="ALT_FRAME"/>
    <property type="molecule type" value="mRNA"/>
</dbReference>
<dbReference type="CCDS" id="CCDS1731.1">
    <molecule id="Q9UPY8-1"/>
</dbReference>
<dbReference type="CCDS" id="CCDS92722.1">
    <molecule id="Q9UPY8-2"/>
</dbReference>
<dbReference type="RefSeq" id="NP_001289979.1">
    <molecule id="Q9UPY8-1"/>
    <property type="nucleotide sequence ID" value="NM_001303050.2"/>
</dbReference>
<dbReference type="RefSeq" id="NP_001397645.1">
    <molecule id="Q9UPY8-2"/>
    <property type="nucleotide sequence ID" value="NM_001410716.1"/>
</dbReference>
<dbReference type="RefSeq" id="NP_036458.2">
    <molecule id="Q9UPY8-1"/>
    <property type="nucleotide sequence ID" value="NM_012326.3"/>
</dbReference>
<dbReference type="RefSeq" id="XP_006712030.1">
    <property type="nucleotide sequence ID" value="XM_006711967.3"/>
</dbReference>
<dbReference type="RefSeq" id="XP_011531002.1">
    <property type="nucleotide sequence ID" value="XM_011532700.1"/>
</dbReference>
<dbReference type="RefSeq" id="XP_016859086.1">
    <property type="nucleotide sequence ID" value="XM_017003597.1"/>
</dbReference>
<dbReference type="RefSeq" id="XP_047299684.1">
    <molecule id="Q9UPY8-1"/>
    <property type="nucleotide sequence ID" value="XM_047443728.1"/>
</dbReference>
<dbReference type="RefSeq" id="XP_054197015.1">
    <molecule id="Q9UPY8-1"/>
    <property type="nucleotide sequence ID" value="XM_054341040.1"/>
</dbReference>
<dbReference type="PDB" id="1WYO">
    <property type="method" value="NMR"/>
    <property type="chains" value="A=1-146"/>
</dbReference>
<dbReference type="PDB" id="3CO1">
    <property type="method" value="X-ray"/>
    <property type="resolution" value="1.40 A"/>
    <property type="chains" value="A=1-130"/>
</dbReference>
<dbReference type="PDB" id="3JAK">
    <property type="method" value="EM"/>
    <property type="resolution" value="3.50 A"/>
    <property type="chains" value="M/N=1-200"/>
</dbReference>
<dbReference type="PDB" id="3JAL">
    <property type="method" value="EM"/>
    <property type="resolution" value="3.50 A"/>
    <property type="chains" value="M/N=1-200"/>
</dbReference>
<dbReference type="PDB" id="3JAR">
    <property type="method" value="EM"/>
    <property type="resolution" value="3.50 A"/>
    <property type="chains" value="M/N=1-200"/>
</dbReference>
<dbReference type="PDB" id="3TQ7">
    <property type="method" value="X-ray"/>
    <property type="resolution" value="2.30 A"/>
    <property type="chains" value="B=200-281"/>
</dbReference>
<dbReference type="PDB" id="7SJ9">
    <property type="method" value="EM"/>
    <property type="resolution" value="3.80 A"/>
    <property type="chains" value="M/N=1-281"/>
</dbReference>
<dbReference type="PDBsum" id="1WYO"/>
<dbReference type="PDBsum" id="3CO1"/>
<dbReference type="PDBsum" id="3JAK"/>
<dbReference type="PDBsum" id="3JAL"/>
<dbReference type="PDBsum" id="3JAR"/>
<dbReference type="PDBsum" id="3TQ7"/>
<dbReference type="PDBsum" id="7SJ9"/>
<dbReference type="BMRB" id="Q9UPY8"/>
<dbReference type="EMDB" id="EMD-25159"/>
<dbReference type="EMDB" id="EMD-25161"/>
<dbReference type="EMDB" id="EMD-6347"/>
<dbReference type="EMDB" id="EMD-6348"/>
<dbReference type="EMDB" id="EMD-6349"/>
<dbReference type="EMDB" id="EMD-6350"/>
<dbReference type="EMDB" id="EMD-6351"/>
<dbReference type="EMDB" id="EMD-6354"/>
<dbReference type="EMDB" id="EMD-7976"/>
<dbReference type="EMDB" id="EMD-7977"/>
<dbReference type="SMR" id="Q9UPY8"/>
<dbReference type="BioGRID" id="116584">
    <property type="interactions" value="228"/>
</dbReference>
<dbReference type="CORUM" id="Q9UPY8"/>
<dbReference type="DIP" id="DIP-56069N"/>
<dbReference type="FunCoup" id="Q9UPY8">
    <property type="interactions" value="579"/>
</dbReference>
<dbReference type="IntAct" id="Q9UPY8">
    <property type="interactions" value="76"/>
</dbReference>
<dbReference type="MINT" id="Q9UPY8"/>
<dbReference type="STRING" id="9606.ENSP00000233121"/>
<dbReference type="iPTMnet" id="Q9UPY8"/>
<dbReference type="PhosphoSitePlus" id="Q9UPY8"/>
<dbReference type="BioMuta" id="MAPRE3"/>
<dbReference type="DMDM" id="20138791"/>
<dbReference type="jPOST" id="Q9UPY8"/>
<dbReference type="MassIVE" id="Q9UPY8"/>
<dbReference type="PaxDb" id="9606-ENSP00000233121"/>
<dbReference type="PeptideAtlas" id="Q9UPY8"/>
<dbReference type="ProteomicsDB" id="85475">
    <molecule id="Q9UPY8-1"/>
</dbReference>
<dbReference type="ProteomicsDB" id="85476">
    <molecule id="Q9UPY8-2"/>
</dbReference>
<dbReference type="Pumba" id="Q9UPY8"/>
<dbReference type="Antibodypedia" id="1949">
    <property type="antibodies" value="273 antibodies from 37 providers"/>
</dbReference>
<dbReference type="DNASU" id="22924"/>
<dbReference type="Ensembl" id="ENST00000233121.7">
    <molecule id="Q9UPY8-1"/>
    <property type="protein sequence ID" value="ENSP00000233121.2"/>
    <property type="gene ID" value="ENSG00000084764.12"/>
</dbReference>
<dbReference type="Ensembl" id="ENST00000402218.1">
    <molecule id="Q9UPY8-2"/>
    <property type="protein sequence ID" value="ENSP00000385715.1"/>
    <property type="gene ID" value="ENSG00000084764.12"/>
</dbReference>
<dbReference type="Ensembl" id="ENST00000405074.7">
    <molecule id="Q9UPY8-2"/>
    <property type="protein sequence ID" value="ENSP00000383915.3"/>
    <property type="gene ID" value="ENSG00000084764.12"/>
</dbReference>
<dbReference type="Ensembl" id="ENST00000648289.1">
    <molecule id="Q9UPY8-2"/>
    <property type="protein sequence ID" value="ENSP00000497057.1"/>
    <property type="gene ID" value="ENSG00000084764.12"/>
</dbReference>
<dbReference type="GeneID" id="22924"/>
<dbReference type="KEGG" id="hsa:22924"/>
<dbReference type="MANE-Select" id="ENST00000233121.7">
    <property type="protein sequence ID" value="ENSP00000233121.2"/>
    <property type="RefSeq nucleotide sequence ID" value="NM_012326.4"/>
    <property type="RefSeq protein sequence ID" value="NP_036458.2"/>
</dbReference>
<dbReference type="UCSC" id="uc002rhw.4">
    <molecule id="Q9UPY8-1"/>
    <property type="organism name" value="human"/>
</dbReference>
<dbReference type="AGR" id="HGNC:6892"/>
<dbReference type="CTD" id="22924"/>
<dbReference type="DisGeNET" id="22924"/>
<dbReference type="GeneCards" id="MAPRE3"/>
<dbReference type="HGNC" id="HGNC:6892">
    <property type="gene designation" value="MAPRE3"/>
</dbReference>
<dbReference type="HPA" id="ENSG00000084764">
    <property type="expression patterns" value="Tissue enhanced (brain)"/>
</dbReference>
<dbReference type="MIM" id="605788">
    <property type="type" value="gene"/>
</dbReference>
<dbReference type="neXtProt" id="NX_Q9UPY8"/>
<dbReference type="OpenTargets" id="ENSG00000084764"/>
<dbReference type="PharmGKB" id="PA30636"/>
<dbReference type="VEuPathDB" id="HostDB:ENSG00000084764"/>
<dbReference type="eggNOG" id="KOG3000">
    <property type="taxonomic scope" value="Eukaryota"/>
</dbReference>
<dbReference type="GeneTree" id="ENSGT00490000043329"/>
<dbReference type="HOGENOM" id="CLU_041744_1_0_1"/>
<dbReference type="InParanoid" id="Q9UPY8"/>
<dbReference type="OMA" id="HTHWIKH"/>
<dbReference type="OrthoDB" id="2119228at2759"/>
<dbReference type="PAN-GO" id="Q9UPY8">
    <property type="GO annotations" value="7 GO annotations based on evolutionary models"/>
</dbReference>
<dbReference type="PhylomeDB" id="Q9UPY8"/>
<dbReference type="TreeFam" id="TF313620"/>
<dbReference type="PathwayCommons" id="Q9UPY8"/>
<dbReference type="SignaLink" id="Q9UPY8"/>
<dbReference type="SIGNOR" id="Q9UPY8"/>
<dbReference type="BioGRID-ORCS" id="22924">
    <property type="hits" value="7 hits in 1157 CRISPR screens"/>
</dbReference>
<dbReference type="CD-CODE" id="FB4E32DD">
    <property type="entry name" value="Presynaptic clusters and postsynaptic densities"/>
</dbReference>
<dbReference type="ChiTaRS" id="MAPRE3">
    <property type="organism name" value="human"/>
</dbReference>
<dbReference type="EvolutionaryTrace" id="Q9UPY8"/>
<dbReference type="GeneWiki" id="MAPRE3"/>
<dbReference type="GenomeRNAi" id="22924"/>
<dbReference type="Pharos" id="Q9UPY8">
    <property type="development level" value="Tbio"/>
</dbReference>
<dbReference type="PRO" id="PR:Q9UPY8"/>
<dbReference type="Proteomes" id="UP000005640">
    <property type="component" value="Chromosome 2"/>
</dbReference>
<dbReference type="RNAct" id="Q9UPY8">
    <property type="molecule type" value="protein"/>
</dbReference>
<dbReference type="Bgee" id="ENSG00000084764">
    <property type="expression patterns" value="Expressed in Brodmann (1909) area 10 and 200 other cell types or tissues"/>
</dbReference>
<dbReference type="ExpressionAtlas" id="Q9UPY8">
    <property type="expression patterns" value="baseline and differential"/>
</dbReference>
<dbReference type="GO" id="GO:0005737">
    <property type="term" value="C:cytoplasm"/>
    <property type="evidence" value="ECO:0000250"/>
    <property type="project" value="BHF-UCL"/>
</dbReference>
<dbReference type="GO" id="GO:0015630">
    <property type="term" value="C:microtubule cytoskeleton"/>
    <property type="evidence" value="ECO:0000314"/>
    <property type="project" value="BHF-UCL"/>
</dbReference>
<dbReference type="GO" id="GO:0005815">
    <property type="term" value="C:microtubule organizing center"/>
    <property type="evidence" value="ECO:0000318"/>
    <property type="project" value="GO_Central"/>
</dbReference>
<dbReference type="GO" id="GO:0035371">
    <property type="term" value="C:microtubule plus-end"/>
    <property type="evidence" value="ECO:0000318"/>
    <property type="project" value="GO_Central"/>
</dbReference>
<dbReference type="GO" id="GO:0030496">
    <property type="term" value="C:midbody"/>
    <property type="evidence" value="ECO:0000250"/>
    <property type="project" value="BHF-UCL"/>
</dbReference>
<dbReference type="GO" id="GO:1905721">
    <property type="term" value="C:mitotic spindle astral microtubule end"/>
    <property type="evidence" value="ECO:0000314"/>
    <property type="project" value="UniProtKB"/>
</dbReference>
<dbReference type="GO" id="GO:0048471">
    <property type="term" value="C:perinuclear region of cytoplasm"/>
    <property type="evidence" value="ECO:0000314"/>
    <property type="project" value="BHF-UCL"/>
</dbReference>
<dbReference type="GO" id="GO:0051233">
    <property type="term" value="C:spindle midzone"/>
    <property type="evidence" value="ECO:0000318"/>
    <property type="project" value="GO_Central"/>
</dbReference>
<dbReference type="GO" id="GO:0042802">
    <property type="term" value="F:identical protein binding"/>
    <property type="evidence" value="ECO:0000353"/>
    <property type="project" value="IntAct"/>
</dbReference>
<dbReference type="GO" id="GO:0008017">
    <property type="term" value="F:microtubule binding"/>
    <property type="evidence" value="ECO:0000250"/>
    <property type="project" value="BHF-UCL"/>
</dbReference>
<dbReference type="GO" id="GO:0051010">
    <property type="term" value="F:microtubule plus-end binding"/>
    <property type="evidence" value="ECO:0000318"/>
    <property type="project" value="GO_Central"/>
</dbReference>
<dbReference type="GO" id="GO:0043539">
    <property type="term" value="F:protein serine/threonine kinase activator activity"/>
    <property type="evidence" value="ECO:0000314"/>
    <property type="project" value="ARUK-UCL"/>
</dbReference>
<dbReference type="GO" id="GO:0120283">
    <property type="term" value="F:protein serine/threonine kinase binding"/>
    <property type="evidence" value="ECO:0000353"/>
    <property type="project" value="ARUK-UCL"/>
</dbReference>
<dbReference type="GO" id="GO:0051301">
    <property type="term" value="P:cell division"/>
    <property type="evidence" value="ECO:0007669"/>
    <property type="project" value="UniProtKB-KW"/>
</dbReference>
<dbReference type="GO" id="GO:0045893">
    <property type="term" value="P:positive regulation of DNA-templated transcription"/>
    <property type="evidence" value="ECO:0000250"/>
    <property type="project" value="BHF-UCL"/>
</dbReference>
<dbReference type="GO" id="GO:0008104">
    <property type="term" value="P:protein localization"/>
    <property type="evidence" value="ECO:0000304"/>
    <property type="project" value="ARUK-UCL"/>
</dbReference>
<dbReference type="GO" id="GO:0035372">
    <property type="term" value="P:protein localization to microtubule"/>
    <property type="evidence" value="ECO:0000318"/>
    <property type="project" value="GO_Central"/>
</dbReference>
<dbReference type="GO" id="GO:0031113">
    <property type="term" value="P:regulation of microtubule polymerization"/>
    <property type="evidence" value="ECO:0000315"/>
    <property type="project" value="ARUK-UCL"/>
</dbReference>
<dbReference type="GO" id="GO:0031110">
    <property type="term" value="P:regulation of microtubule polymerization or depolymerization"/>
    <property type="evidence" value="ECO:0000318"/>
    <property type="project" value="GO_Central"/>
</dbReference>
<dbReference type="GO" id="GO:0051225">
    <property type="term" value="P:spindle assembly"/>
    <property type="evidence" value="ECO:0000318"/>
    <property type="project" value="GO_Central"/>
</dbReference>
<dbReference type="FunFam" id="1.20.5.1430:FF:000003">
    <property type="entry name" value="microtubule-associated protein RP/EB family member 3 isoform X1"/>
    <property type="match status" value="1"/>
</dbReference>
<dbReference type="FunFam" id="1.10.418.10:FF:000007">
    <property type="entry name" value="Microtubule-associated protein, RP/EB family, member 2"/>
    <property type="match status" value="1"/>
</dbReference>
<dbReference type="Gene3D" id="1.20.5.1430">
    <property type="match status" value="1"/>
</dbReference>
<dbReference type="Gene3D" id="1.10.418.10">
    <property type="entry name" value="Calponin-like domain"/>
    <property type="match status" value="1"/>
</dbReference>
<dbReference type="InterPro" id="IPR001715">
    <property type="entry name" value="CH_dom"/>
</dbReference>
<dbReference type="InterPro" id="IPR036872">
    <property type="entry name" value="CH_dom_sf"/>
</dbReference>
<dbReference type="InterPro" id="IPR004953">
    <property type="entry name" value="EB1_C"/>
</dbReference>
<dbReference type="InterPro" id="IPR036133">
    <property type="entry name" value="EB1_C_sf"/>
</dbReference>
<dbReference type="InterPro" id="IPR027328">
    <property type="entry name" value="MAPRE"/>
</dbReference>
<dbReference type="PANTHER" id="PTHR10623">
    <property type="entry name" value="MICROTUBULE-ASSOCIATED PROTEIN RP/EB FAMILY MEMBER"/>
    <property type="match status" value="1"/>
</dbReference>
<dbReference type="Pfam" id="PF00307">
    <property type="entry name" value="CH"/>
    <property type="match status" value="1"/>
</dbReference>
<dbReference type="Pfam" id="PF03271">
    <property type="entry name" value="EB1"/>
    <property type="match status" value="1"/>
</dbReference>
<dbReference type="SUPFAM" id="SSF47576">
    <property type="entry name" value="Calponin-homology domain, CH-domain"/>
    <property type="match status" value="1"/>
</dbReference>
<dbReference type="SUPFAM" id="SSF140612">
    <property type="entry name" value="EB1 dimerisation domain-like"/>
    <property type="match status" value="1"/>
</dbReference>
<dbReference type="PROSITE" id="PS50021">
    <property type="entry name" value="CH"/>
    <property type="match status" value="1"/>
</dbReference>
<dbReference type="PROSITE" id="PS51230">
    <property type="entry name" value="EB1_C"/>
    <property type="match status" value="1"/>
</dbReference>
<gene>
    <name type="primary">MAPRE3</name>
</gene>
<accession>Q9UPY8</accession>
<accession>B7WPK5</accession>
<accession>O00265</accession>
<accession>Q6FHB0</accession>
<accession>Q6FI15</accession>
<accession>Q9BZP7</accession>
<accession>Q9BZP8</accession>
<proteinExistence type="evidence at protein level"/>
<sequence>MAVNVYSTSVTSENLSRHDMLAWVNDSLHLNYTKIEQLCSGAAYCQFMDMLFPGCVHLRKVKFQAKLEHEYIHNFKVLQAAFKKMGVDKIIPVEKLVKGKFQDNFEFIQWFKKFFDANYDGKDYNPLLARQGQDVAPPPNPGDQIFNKSKKLIGTAVPQRTSPTGPKNMQTSGRLSNVAPPCILRKNPPSARNGGHETDAQILELNQQLVDLKLTVDGLEKERDFYFSKLRDIELICQEHESENSPVISGIIGILYATEEGFAPPEDDEIEEHQQEDQDEY</sequence>
<reference key="1">
    <citation type="journal article" date="2000" name="Oncogene">
        <title>EB3, a novel member of the EB1 family preferentially expressed in the central nervous system, binds to a CNS-specific APC homologue.</title>
        <authorList>
            <person name="Nakagawa H."/>
            <person name="Koyama K."/>
            <person name="Murata Y."/>
            <person name="Morito M."/>
            <person name="Akiyama T."/>
            <person name="Nakamura Y."/>
        </authorList>
    </citation>
    <scope>NUCLEOTIDE SEQUENCE [MRNA] (ISOFORM 1)</scope>
    <scope>INTERACTION WITH APC2</scope>
    <scope>TISSUE SPECIFICITY</scope>
    <scope>SUBCELLULAR LOCATION</scope>
    <source>
        <tissue>Fetal brain</tissue>
    </source>
</reference>
<reference key="2">
    <citation type="journal article" date="2001" name="Genomics">
        <title>Characterization of human MAPRE genes and their proteins.</title>
        <authorList>
            <person name="Su L.-K."/>
            <person name="Qi Y."/>
        </authorList>
    </citation>
    <scope>NUCLEOTIDE SEQUENCE [GENOMIC DNA / MRNA] (ISOFORMS 1 AND 2)</scope>
</reference>
<reference key="3">
    <citation type="submission" date="2004-06" db="EMBL/GenBank/DDBJ databases">
        <title>Cloning of human full open reading frames in Gateway(TM) system entry vector (pDONR201).</title>
        <authorList>
            <person name="Halleck A."/>
            <person name="Ebert L."/>
            <person name="Mkoundinya M."/>
            <person name="Schick M."/>
            <person name="Eisenstein S."/>
            <person name="Neubert P."/>
            <person name="Kstrang K."/>
            <person name="Schatten R."/>
            <person name="Shen B."/>
            <person name="Henze S."/>
            <person name="Mar W."/>
            <person name="Korn B."/>
            <person name="Zuo D."/>
            <person name="Hu Y."/>
            <person name="LaBaer J."/>
        </authorList>
    </citation>
    <scope>NUCLEOTIDE SEQUENCE [LARGE SCALE MRNA] (ISOFORM 1)</scope>
</reference>
<reference key="4">
    <citation type="journal article" date="2005" name="Nature">
        <title>Generation and annotation of the DNA sequences of human chromosomes 2 and 4.</title>
        <authorList>
            <person name="Hillier L.W."/>
            <person name="Graves T.A."/>
            <person name="Fulton R.S."/>
            <person name="Fulton L.A."/>
            <person name="Pepin K.H."/>
            <person name="Minx P."/>
            <person name="Wagner-McPherson C."/>
            <person name="Layman D."/>
            <person name="Wylie K."/>
            <person name="Sekhon M."/>
            <person name="Becker M.C."/>
            <person name="Fewell G.A."/>
            <person name="Delehaunty K.D."/>
            <person name="Miner T.L."/>
            <person name="Nash W.E."/>
            <person name="Kremitzki C."/>
            <person name="Oddy L."/>
            <person name="Du H."/>
            <person name="Sun H."/>
            <person name="Bradshaw-Cordum H."/>
            <person name="Ali J."/>
            <person name="Carter J."/>
            <person name="Cordes M."/>
            <person name="Harris A."/>
            <person name="Isak A."/>
            <person name="van Brunt A."/>
            <person name="Nguyen C."/>
            <person name="Du F."/>
            <person name="Courtney L."/>
            <person name="Kalicki J."/>
            <person name="Ozersky P."/>
            <person name="Abbott S."/>
            <person name="Armstrong J."/>
            <person name="Belter E.A."/>
            <person name="Caruso L."/>
            <person name="Cedroni M."/>
            <person name="Cotton M."/>
            <person name="Davidson T."/>
            <person name="Desai A."/>
            <person name="Elliott G."/>
            <person name="Erb T."/>
            <person name="Fronick C."/>
            <person name="Gaige T."/>
            <person name="Haakenson W."/>
            <person name="Haglund K."/>
            <person name="Holmes A."/>
            <person name="Harkins R."/>
            <person name="Kim K."/>
            <person name="Kruchowski S.S."/>
            <person name="Strong C.M."/>
            <person name="Grewal N."/>
            <person name="Goyea E."/>
            <person name="Hou S."/>
            <person name="Levy A."/>
            <person name="Martinka S."/>
            <person name="Mead K."/>
            <person name="McLellan M.D."/>
            <person name="Meyer R."/>
            <person name="Randall-Maher J."/>
            <person name="Tomlinson C."/>
            <person name="Dauphin-Kohlberg S."/>
            <person name="Kozlowicz-Reilly A."/>
            <person name="Shah N."/>
            <person name="Swearengen-Shahid S."/>
            <person name="Snider J."/>
            <person name="Strong J.T."/>
            <person name="Thompson J."/>
            <person name="Yoakum M."/>
            <person name="Leonard S."/>
            <person name="Pearman C."/>
            <person name="Trani L."/>
            <person name="Radionenko M."/>
            <person name="Waligorski J.E."/>
            <person name="Wang C."/>
            <person name="Rock S.M."/>
            <person name="Tin-Wollam A.-M."/>
            <person name="Maupin R."/>
            <person name="Latreille P."/>
            <person name="Wendl M.C."/>
            <person name="Yang S.-P."/>
            <person name="Pohl C."/>
            <person name="Wallis J.W."/>
            <person name="Spieth J."/>
            <person name="Bieri T.A."/>
            <person name="Berkowicz N."/>
            <person name="Nelson J.O."/>
            <person name="Osborne J."/>
            <person name="Ding L."/>
            <person name="Meyer R."/>
            <person name="Sabo A."/>
            <person name="Shotland Y."/>
            <person name="Sinha P."/>
            <person name="Wohldmann P.E."/>
            <person name="Cook L.L."/>
            <person name="Hickenbotham M.T."/>
            <person name="Eldred J."/>
            <person name="Williams D."/>
            <person name="Jones T.A."/>
            <person name="She X."/>
            <person name="Ciccarelli F.D."/>
            <person name="Izaurralde E."/>
            <person name="Taylor J."/>
            <person name="Schmutz J."/>
            <person name="Myers R.M."/>
            <person name="Cox D.R."/>
            <person name="Huang X."/>
            <person name="McPherson J.D."/>
            <person name="Mardis E.R."/>
            <person name="Clifton S.W."/>
            <person name="Warren W.C."/>
            <person name="Chinwalla A.T."/>
            <person name="Eddy S.R."/>
            <person name="Marra M.A."/>
            <person name="Ovcharenko I."/>
            <person name="Furey T.S."/>
            <person name="Miller W."/>
            <person name="Eichler E.E."/>
            <person name="Bork P."/>
            <person name="Suyama M."/>
            <person name="Torrents D."/>
            <person name="Waterston R.H."/>
            <person name="Wilson R.K."/>
        </authorList>
    </citation>
    <scope>NUCLEOTIDE SEQUENCE [LARGE SCALE GENOMIC DNA]</scope>
</reference>
<reference key="5">
    <citation type="submission" date="2005-09" db="EMBL/GenBank/DDBJ databases">
        <authorList>
            <person name="Mural R.J."/>
            <person name="Istrail S."/>
            <person name="Sutton G.G."/>
            <person name="Florea L."/>
            <person name="Halpern A.L."/>
            <person name="Mobarry C.M."/>
            <person name="Lippert R."/>
            <person name="Walenz B."/>
            <person name="Shatkay H."/>
            <person name="Dew I."/>
            <person name="Miller J.R."/>
            <person name="Flanigan M.J."/>
            <person name="Edwards N.J."/>
            <person name="Bolanos R."/>
            <person name="Fasulo D."/>
            <person name="Halldorsson B.V."/>
            <person name="Hannenhalli S."/>
            <person name="Turner R."/>
            <person name="Yooseph S."/>
            <person name="Lu F."/>
            <person name="Nusskern D.R."/>
            <person name="Shue B.C."/>
            <person name="Zheng X.H."/>
            <person name="Zhong F."/>
            <person name="Delcher A.L."/>
            <person name="Huson D.H."/>
            <person name="Kravitz S.A."/>
            <person name="Mouchard L."/>
            <person name="Reinert K."/>
            <person name="Remington K.A."/>
            <person name="Clark A.G."/>
            <person name="Waterman M.S."/>
            <person name="Eichler E.E."/>
            <person name="Adams M.D."/>
            <person name="Hunkapiller M.W."/>
            <person name="Myers E.W."/>
            <person name="Venter J.C."/>
        </authorList>
    </citation>
    <scope>NUCLEOTIDE SEQUENCE [LARGE SCALE GENOMIC DNA]</scope>
</reference>
<reference key="6">
    <citation type="journal article" date="2004" name="Genome Res.">
        <title>The status, quality, and expansion of the NIH full-length cDNA project: the Mammalian Gene Collection (MGC).</title>
        <authorList>
            <consortium name="The MGC Project Team"/>
        </authorList>
    </citation>
    <scope>NUCLEOTIDE SEQUENCE [LARGE SCALE MRNA] (ISOFORM 1)</scope>
    <source>
        <tissue>Kidney</tissue>
    </source>
</reference>
<reference key="7">
    <citation type="journal article" date="1997" name="J. Immunol.">
        <title>RP1, a new member of the adenomatous polyposis coli-binding EB1-like gene family, is differentially expressed in activated T cells.</title>
        <authorList>
            <person name="Renner C."/>
            <person name="Pfitzenmeier J.-P."/>
            <person name="Gerlach K."/>
            <person name="Held G."/>
            <person name="Ohnesorge S."/>
            <person name="Sahin U."/>
            <person name="Bauer S."/>
            <person name="Pfreundschuh M."/>
        </authorList>
    </citation>
    <scope>NUCLEOTIDE SEQUENCE [MRNA] OF 1-200 (ISOFORM 1)</scope>
</reference>
<reference key="8">
    <citation type="journal article" date="1999" name="Int. J. Cancer">
        <title>EB/RP gene family encodes tubulin binding proteins.</title>
        <authorList>
            <person name="Juwana J.-P."/>
            <person name="Henderikx P."/>
            <person name="Mischo A."/>
            <person name="Wadle A."/>
            <person name="Fadle N."/>
            <person name="Gerlach K."/>
            <person name="Arends J.W."/>
            <person name="Hoogenboom H."/>
            <person name="Pfreundschuh M."/>
            <person name="Renner C."/>
        </authorList>
    </citation>
    <scope>INTERACTION WITH TUBULIN</scope>
</reference>
<reference key="9">
    <citation type="journal article" date="2003" name="J. Biol. Chem.">
        <title>Characterization of functional domains of human EB1 family proteins.</title>
        <authorList>
            <person name="Bu W."/>
            <person name="Su L.-K."/>
        </authorList>
    </citation>
    <scope>CHARACTERIZATION</scope>
    <scope>INTERACTION WITH TUBULIN; APC AND DCTN1</scope>
</reference>
<reference key="10">
    <citation type="journal article" date="2007" name="Proc. Natl. Acad. Sci. U.S.A.">
        <title>Structural basis for tubulin recognition by cytoplasmic linker protein 170 and its autoinhibition.</title>
        <authorList>
            <person name="Mishima M."/>
            <person name="Maesaki R."/>
            <person name="Kasa M."/>
            <person name="Watanabe T."/>
            <person name="Fukata M."/>
            <person name="Kaibuchi K."/>
            <person name="Hakoshima T."/>
        </authorList>
    </citation>
    <scope>INTERACTION WITH CLIP1</scope>
</reference>
<reference key="11">
    <citation type="journal article" date="2008" name="Proc. Natl. Acad. Sci. U.S.A.">
        <title>A quantitative atlas of mitotic phosphorylation.</title>
        <authorList>
            <person name="Dephoure N."/>
            <person name="Zhou C."/>
            <person name="Villen J."/>
            <person name="Beausoleil S.A."/>
            <person name="Bakalarski C.E."/>
            <person name="Elledge S.J."/>
            <person name="Gygi S.P."/>
        </authorList>
    </citation>
    <scope>IDENTIFICATION BY MASS SPECTROMETRY [LARGE SCALE ANALYSIS]</scope>
    <source>
        <tissue>Cervix carcinoma</tissue>
    </source>
</reference>
<reference key="12">
    <citation type="journal article" date="2009" name="Neuron">
        <title>Dynamic microtubules regulate dendritic spine morphology and synaptic plasticity.</title>
        <authorList>
            <person name="Jaworski J."/>
            <person name="Kapitein L.C."/>
            <person name="Gouveia S.M."/>
            <person name="Dortland B.R."/>
            <person name="Wulf P.S."/>
            <person name="Grigoriev I."/>
            <person name="Camera P."/>
            <person name="Spangler S.A."/>
            <person name="Di Stefano P."/>
            <person name="Demmers J."/>
            <person name="Krugers H."/>
            <person name="Defilippi P."/>
            <person name="Akhmanova A."/>
            <person name="Hoogenraad C.C."/>
        </authorList>
    </citation>
    <scope>INTERACTION WITH SRCIN1</scope>
</reference>
<reference key="13">
    <citation type="journal article" date="2011" name="BMC Syst. Biol.">
        <title>Initial characterization of the human central proteome.</title>
        <authorList>
            <person name="Burkard T.R."/>
            <person name="Planyavsky M."/>
            <person name="Kaupe I."/>
            <person name="Breitwieser F.P."/>
            <person name="Buerckstuemmer T."/>
            <person name="Bennett K.L."/>
            <person name="Superti-Furga G."/>
            <person name="Colinge J."/>
        </authorList>
    </citation>
    <scope>IDENTIFICATION BY MASS SPECTROMETRY [LARGE SCALE ANALYSIS]</scope>
</reference>
<reference key="14">
    <citation type="journal article" date="2011" name="J. Cell Biol.">
        <title>SLAIN2 links microtubule plus end-tracking proteins and controls microtubule growth in interphase.</title>
        <authorList>
            <person name="van der Vaart B."/>
            <person name="Manatschal C."/>
            <person name="Grigoriev I."/>
            <person name="Olieric V."/>
            <person name="Gouveia S.M."/>
            <person name="Bjelic S."/>
            <person name="Demmers J."/>
            <person name="Vorobjev I."/>
            <person name="Hoogenraad C.C."/>
            <person name="Steinmetz M.O."/>
            <person name="Akhmanova A."/>
        </authorList>
    </citation>
    <scope>INTERACTION WITH SLAIN2 AND SLAIN1</scope>
</reference>
<reference key="15">
    <citation type="journal article" date="2013" name="J. Proteome Res.">
        <title>Toward a comprehensive characterization of a human cancer cell phosphoproteome.</title>
        <authorList>
            <person name="Zhou H."/>
            <person name="Di Palma S."/>
            <person name="Preisinger C."/>
            <person name="Peng M."/>
            <person name="Polat A.N."/>
            <person name="Heck A.J."/>
            <person name="Mohammed S."/>
        </authorList>
    </citation>
    <scope>PHOSPHORYLATION [LARGE SCALE ANALYSIS] AT SER-162</scope>
    <scope>IDENTIFICATION BY MASS SPECTROMETRY [LARGE SCALE ANALYSIS]</scope>
    <source>
        <tissue>Cervix carcinoma</tissue>
        <tissue>Erythroleukemia</tissue>
    </source>
</reference>
<reference key="16">
    <citation type="journal article" date="2014" name="J. Cell Sci.">
        <title>A newly identified myomegalin isoform functions in Golgi microtubule organization and ER-Golgi transport.</title>
        <authorList>
            <person name="Wang Z."/>
            <person name="Zhang C."/>
            <person name="Qi R.Z."/>
        </authorList>
    </citation>
    <scope>INTERACTION WITH PDE4DIP</scope>
</reference>
<reference key="17">
    <citation type="journal article" date="2017" name="J. Cell Biol.">
        <title>EB1 and EB3 regulate microtubule minus end organization and Golgi morphology.</title>
        <authorList>
            <person name="Yang C."/>
            <person name="Wu J."/>
            <person name="de Heus C."/>
            <person name="Grigoriev I."/>
            <person name="Liv N."/>
            <person name="Yao Y."/>
            <person name="Smal I."/>
            <person name="Meijering E."/>
            <person name="Klumperman J."/>
            <person name="Qi R.Z."/>
            <person name="Akhmanova A."/>
        </authorList>
    </citation>
    <scope>FUNCTION</scope>
    <scope>INTERACTION WITH AKAP9 AND PDE4DIP</scope>
    <scope>MUTAGENESIS OF TYR-226 AND GLU-234</scope>
</reference>
<reference key="18">
    <citation type="journal article" date="2022" name="Proc. Natl. Acad. Sci. U.S.A.">
        <title>Structural transitions in the GTP cap visualized by cryo-electron microscopy of catalytically inactive microtubules.</title>
        <authorList>
            <person name="LaFrance B.J."/>
            <person name="Roostalu J."/>
            <person name="Henkin G."/>
            <person name="Greber B.J."/>
            <person name="Zhang R."/>
            <person name="Normanno D."/>
            <person name="McCollum C.O."/>
            <person name="Surrey T."/>
            <person name="Nogales E."/>
        </authorList>
    </citation>
    <scope>INTERACTION WITH TUBULIN</scope>
</reference>
<reference key="19">
    <citation type="submission" date="2005-08" db="PDB data bank">
        <title>Solution structure of the CH domain of human microtubule-associated protein RP/EB family member 3.</title>
        <authorList>
            <consortium name="RIKEN structural genomics initiative (RSGI)"/>
        </authorList>
    </citation>
    <scope>STRUCTURE BY NMR OF 1-146</scope>
</reference>
<reference key="20">
    <citation type="journal article" date="2009" name="J. Cell Biol.">
        <title>Mammalian end binding proteins control persistent microtubule growth.</title>
        <authorList>
            <person name="Komarova Y."/>
            <person name="De Groot C.O."/>
            <person name="Grigoriev I."/>
            <person name="Gouveia S.M."/>
            <person name="Munteanu E.L."/>
            <person name="Schober J.M."/>
            <person name="Honnappa S."/>
            <person name="Buey R.M."/>
            <person name="Hoogenraad C.C."/>
            <person name="Dogterom M."/>
            <person name="Borisy G.G."/>
            <person name="Steinmetz M.O."/>
            <person name="Akhmanova A."/>
        </authorList>
    </citation>
    <scope>X-RAY CRYSTALLOGRAPHY (1.4 ANGSTROMS) OF 1-130</scope>
    <scope>FUNCTION</scope>
    <scope>SUBUNIT</scope>
    <scope>INTERACTION WITH MAPRE1</scope>
    <scope>SUBCELLULAR LOCATION</scope>
</reference>
<keyword id="KW-0002">3D-structure</keyword>
<keyword id="KW-0025">Alternative splicing</keyword>
<keyword id="KW-0131">Cell cycle</keyword>
<keyword id="KW-0132">Cell division</keyword>
<keyword id="KW-0963">Cytoplasm</keyword>
<keyword id="KW-0206">Cytoskeleton</keyword>
<keyword id="KW-0493">Microtubule</keyword>
<keyword id="KW-0498">Mitosis</keyword>
<keyword id="KW-0597">Phosphoprotein</keyword>
<keyword id="KW-1267">Proteomics identification</keyword>
<keyword id="KW-1185">Reference proteome</keyword>
<comment type="function">
    <text evidence="10 13">Plus-end tracking protein (+TIP) that binds to the plus-end of microtubules and regulates the dynamics of the microtubule cytoskeleton (PubMed:19255245, PubMed:28814570). Promotes microtubule growth (PubMed:19255245, PubMed:28814570). May be involved in spindle function by stabilizing microtubules and anchoring them at centrosomes (PubMed:19255245, PubMed:28814570). Also acts as a regulator of minus-end microtubule organization: interacts with the complex formed by AKAP9 and PDE4DIP, leading to recruit CAMSAP2 to the Golgi apparatus, thereby tethering non-centrosomal minus-end microtubules to the Golgi, an important step for polarized cell movement (PubMed:28814570). Promotes elongation of CAMSAP2-decorated microtubule stretches on the minus-end of microtubules (PubMed:28814570).</text>
</comment>
<comment type="subunit">
    <text evidence="5 6 7 8 9 10 11 12 13 14">Homodimer (PubMed:19255245). Heterodimer with MAPRE1 (PubMed:19255245). Binds monomeric and polymerized GTP-bound tubulin (PubMed:10188731, PubMed:34996871). Interacts with APC2 (PubMed:10644998). Interacts with DCTN1 and SRCIN1 (PubMed:14514668, PubMed:19146815). Binds to the C-terminal domain of APC (PubMed:14514668). Interacts (via C-terminus) with CLIP1 (PubMed:17563362). Interacts with SLAIN2 and SLAIN1 (PubMed:21646404). Interacts with AKAP9 (PubMed:28814570). Interacts with PDE4DIP (PubMed:28814570). Interacts with PDE4DIP isoform 13/MMG8/SMYLE; this interaction is required for its recruitment to the Golgi apparatus (PubMed:25217626).</text>
</comment>
<comment type="interaction">
    <interactant intactId="EBI-726739">
        <id>Q9UPY8</id>
    </interactant>
    <interactant intactId="EBI-5653378">
        <id>Q15327</id>
        <label>ANKRD1</label>
    </interactant>
    <organismsDiffer>false</organismsDiffer>
    <experiments>5</experiments>
</comment>
<comment type="interaction">
    <interactant intactId="EBI-726739">
        <id>Q9UPY8</id>
    </interactant>
    <interactant intactId="EBI-1053045">
        <id>O95996</id>
        <label>APC2</label>
    </interactant>
    <organismsDiffer>false</organismsDiffer>
    <experiments>7</experiments>
</comment>
<comment type="interaction">
    <interactant intactId="EBI-726739">
        <id>Q9UPY8</id>
    </interactant>
    <interactant intactId="EBI-741261">
        <id>Q8NEU8</id>
        <label>APPL2</label>
    </interactant>
    <organismsDiffer>false</organismsDiffer>
    <experiments>3</experiments>
</comment>
<comment type="interaction">
    <interactant intactId="EBI-726739">
        <id>Q9UPY8</id>
    </interactant>
    <interactant intactId="EBI-18396958">
        <id>A1L168</id>
        <label>C20orf202</label>
    </interactant>
    <organismsDiffer>false</organismsDiffer>
    <experiments>3</experiments>
</comment>
<comment type="interaction">
    <interactant intactId="EBI-726739">
        <id>Q9UPY8</id>
    </interactant>
    <interactant intactId="EBI-17793327">
        <id>Q9C0I3-2</id>
        <label>CCSER1</label>
    </interactant>
    <organismsDiffer>false</organismsDiffer>
    <experiments>3</experiments>
</comment>
<comment type="interaction">
    <interactant intactId="EBI-726739">
        <id>Q9UPY8</id>
    </interactant>
    <interactant intactId="EBI-12593838">
        <id>Q6WN34-2</id>
        <label>CHRDL2</label>
    </interactant>
    <organismsDiffer>false</organismsDiffer>
    <experiments>3</experiments>
</comment>
<comment type="interaction">
    <interactant intactId="EBI-726739">
        <id>Q9UPY8</id>
    </interactant>
    <interactant intactId="EBI-10205543">
        <id>Q9NQ79</id>
        <label>CRTAC1</label>
    </interactant>
    <organismsDiffer>false</organismsDiffer>
    <experiments>3</experiments>
</comment>
<comment type="interaction">
    <interactant intactId="EBI-726739">
        <id>Q9UPY8</id>
    </interactant>
    <interactant intactId="EBI-715074">
        <id>Q13561</id>
        <label>DCTN2</label>
    </interactant>
    <organismsDiffer>false</organismsDiffer>
    <experiments>3</experiments>
</comment>
<comment type="interaction">
    <interactant intactId="EBI-726739">
        <id>Q9UPY8</id>
    </interactant>
    <interactant intactId="EBI-742054">
        <id>Q96D03</id>
        <label>DDIT4L</label>
    </interactant>
    <organismsDiffer>false</organismsDiffer>
    <experiments>3</experiments>
</comment>
<comment type="interaction">
    <interactant intactId="EBI-726739">
        <id>Q9UPY8</id>
    </interactant>
    <interactant intactId="EBI-398610">
        <id>O60573</id>
        <label>EIF4E2</label>
    </interactant>
    <organismsDiffer>false</organismsDiffer>
    <experiments>3</experiments>
</comment>
<comment type="interaction">
    <interactant intactId="EBI-726739">
        <id>Q9UPY8</id>
    </interactant>
    <interactant intactId="EBI-7225287">
        <id>Q96MY7</id>
        <label>FAM161B</label>
    </interactant>
    <organismsDiffer>false</organismsDiffer>
    <experiments>3</experiments>
</comment>
<comment type="interaction">
    <interactant intactId="EBI-726739">
        <id>Q9UPY8</id>
    </interactant>
    <interactant intactId="EBI-11320806">
        <id>Q9NU39</id>
        <label>FOXD4L1</label>
    </interactant>
    <organismsDiffer>false</organismsDiffer>
    <experiments>3</experiments>
</comment>
<comment type="interaction">
    <interactant intactId="EBI-726739">
        <id>Q9UPY8</id>
    </interactant>
    <interactant intactId="EBI-12911102">
        <id>Q8WXT5</id>
        <label>FOXD4L4</label>
    </interactant>
    <organismsDiffer>false</organismsDiffer>
    <experiments>3</experiments>
</comment>
<comment type="interaction">
    <interactant intactId="EBI-726739">
        <id>Q9UPY8</id>
    </interactant>
    <interactant intactId="EBI-7960826">
        <id>Q8NHY3</id>
        <label>GAS2L2</label>
    </interactant>
    <organismsDiffer>false</organismsDiffer>
    <experiments>6</experiments>
</comment>
<comment type="interaction">
    <interactant intactId="EBI-726739">
        <id>Q9UPY8</id>
    </interactant>
    <interactant intactId="EBI-1030560">
        <id>P13984</id>
        <label>GTF2F2</label>
    </interactant>
    <organismsDiffer>false</organismsDiffer>
    <experiments>3</experiments>
</comment>
<comment type="interaction">
    <interactant intactId="EBI-726739">
        <id>Q9UPY8</id>
    </interactant>
    <interactant intactId="EBI-11061081">
        <id>Q8N3J3-3</id>
        <label>HROB</label>
    </interactant>
    <organismsDiffer>false</organismsDiffer>
    <experiments>3</experiments>
</comment>
<comment type="interaction">
    <interactant intactId="EBI-726739">
        <id>Q9UPY8</id>
    </interactant>
    <interactant intactId="EBI-11522367">
        <id>Q13422-7</id>
        <label>IKZF1</label>
    </interactant>
    <organismsDiffer>false</organismsDiffer>
    <experiments>3</experiments>
</comment>
<comment type="interaction">
    <interactant intactId="EBI-726739">
        <id>Q9UPY8</id>
    </interactant>
    <interactant intactId="EBI-852823">
        <id>P05412</id>
        <label>JUN</label>
    </interactant>
    <organismsDiffer>false</organismsDiffer>
    <experiments>3</experiments>
</comment>
<comment type="interaction">
    <interactant intactId="EBI-726739">
        <id>Q9UPY8</id>
    </interactant>
    <interactant intactId="EBI-9478422">
        <id>Q96G42</id>
        <label>KLHDC7B</label>
    </interactant>
    <organismsDiffer>false</organismsDiffer>
    <experiments>3</experiments>
</comment>
<comment type="interaction">
    <interactant intactId="EBI-726739">
        <id>Q9UPY8</id>
    </interactant>
    <interactant intactId="EBI-373334">
        <id>Q9Y448</id>
        <label>KNSTRN</label>
    </interactant>
    <organismsDiffer>false</organismsDiffer>
    <experiments>3</experiments>
</comment>
<comment type="interaction">
    <interactant intactId="EBI-726739">
        <id>Q9UPY8</id>
    </interactant>
    <interactant intactId="EBI-2339312">
        <id>P28838</id>
        <label>LAP3</label>
    </interactant>
    <organismsDiffer>false</organismsDiffer>
    <experiments>3</experiments>
</comment>
<comment type="interaction">
    <interactant intactId="EBI-726739">
        <id>Q9UPY8</id>
    </interactant>
    <interactant intactId="EBI-2865388">
        <id>Q969G2</id>
        <label>LHX4</label>
    </interactant>
    <organismsDiffer>false</organismsDiffer>
    <experiments>3</experiments>
</comment>
<comment type="interaction">
    <interactant intactId="EBI-726739">
        <id>Q9UPY8</id>
    </interactant>
    <interactant intactId="EBI-739696">
        <id>P25791</id>
        <label>LMO2</label>
    </interactant>
    <organismsDiffer>false</organismsDiffer>
    <experiments>5</experiments>
</comment>
<comment type="interaction">
    <interactant intactId="EBI-726739">
        <id>Q9UPY8</id>
    </interactant>
    <interactant intactId="EBI-11959475">
        <id>P25791-3</id>
        <label>LMO2</label>
    </interactant>
    <organismsDiffer>false</organismsDiffer>
    <experiments>6</experiments>
</comment>
<comment type="interaction">
    <interactant intactId="EBI-726739">
        <id>Q9UPY8</id>
    </interactant>
    <interactant intactId="EBI-1004115">
        <id>Q15691</id>
        <label>MAPRE1</label>
    </interactant>
    <organismsDiffer>false</organismsDiffer>
    <experiments>22</experiments>
</comment>
<comment type="interaction">
    <interactant intactId="EBI-726739">
        <id>Q9UPY8</id>
    </interactant>
    <interactant intactId="EBI-739717">
        <id>Q15555</id>
        <label>MAPRE2</label>
    </interactant>
    <organismsDiffer>false</organismsDiffer>
    <experiments>9</experiments>
</comment>
<comment type="interaction">
    <interactant intactId="EBI-726739">
        <id>Q9UPY8</id>
    </interactant>
    <interactant intactId="EBI-726739">
        <id>Q9UPY8</id>
        <label>MAPRE3</label>
    </interactant>
    <organismsDiffer>false</organismsDiffer>
    <experiments>7</experiments>
</comment>
<comment type="interaction">
    <interactant intactId="EBI-726739">
        <id>Q9UPY8</id>
    </interactant>
    <interactant intactId="EBI-366182">
        <id>P10636</id>
        <label>MAPT</label>
    </interactant>
    <organismsDiffer>false</organismsDiffer>
    <experiments>3</experiments>
</comment>
<comment type="interaction">
    <interactant intactId="EBI-726739">
        <id>Q9UPY8</id>
    </interactant>
    <interactant intactId="EBI-949983">
        <id>Q9H992</id>
        <label>MARCHF7</label>
    </interactant>
    <organismsDiffer>false</organismsDiffer>
    <experiments>5</experiments>
</comment>
<comment type="interaction">
    <interactant intactId="EBI-726739">
        <id>Q9UPY8</id>
    </interactant>
    <interactant intactId="EBI-16439278">
        <id>Q6FHY5</id>
        <label>MEOX2</label>
    </interactant>
    <organismsDiffer>false</organismsDiffer>
    <experiments>3</experiments>
</comment>
<comment type="interaction">
    <interactant intactId="EBI-726739">
        <id>Q9UPY8</id>
    </interactant>
    <interactant intactId="EBI-358272">
        <id>P52815</id>
        <label>MRPL12</label>
    </interactant>
    <organismsDiffer>false</organismsDiffer>
    <experiments>3</experiments>
</comment>
<comment type="interaction">
    <interactant intactId="EBI-726739">
        <id>Q9UPY8</id>
    </interactant>
    <interactant intactId="EBI-9640281">
        <id>Q5VU43-2</id>
        <label>PDE4DIP</label>
    </interactant>
    <organismsDiffer>false</organismsDiffer>
    <experiments>3</experiments>
</comment>
<comment type="interaction">
    <interactant intactId="EBI-726739">
        <id>Q9UPY8</id>
    </interactant>
    <interactant intactId="EBI-79165">
        <id>Q9NRD5</id>
        <label>PICK1</label>
    </interactant>
    <organismsDiffer>false</organismsDiffer>
    <experiments>3</experiments>
</comment>
<comment type="interaction">
    <interactant intactId="EBI-726739">
        <id>Q9UPY8</id>
    </interactant>
    <interactant intactId="EBI-17480471">
        <id>Q01851</id>
        <label>POU4F1</label>
    </interactant>
    <organismsDiffer>false</organismsDiffer>
    <experiments>3</experiments>
</comment>
<comment type="interaction">
    <interactant intactId="EBI-726739">
        <id>Q9UPY8</id>
    </interactant>
    <interactant intactId="EBI-359352">
        <id>P25786</id>
        <label>PSMA1</label>
    </interactant>
    <organismsDiffer>false</organismsDiffer>
    <experiments>4</experiments>
</comment>
<comment type="interaction">
    <interactant intactId="EBI-726739">
        <id>Q9UPY8</id>
    </interactant>
    <interactant intactId="EBI-372273">
        <id>P20618</id>
        <label>PSMB1</label>
    </interactant>
    <organismsDiffer>false</organismsDiffer>
    <experiments>3</experiments>
</comment>
<comment type="interaction">
    <interactant intactId="EBI-726739">
        <id>Q9UPY8</id>
    </interactant>
    <interactant intactId="EBI-7392664">
        <id>Q6PGN9</id>
        <label>PSRC1</label>
    </interactant>
    <organismsDiffer>false</organismsDiffer>
    <experiments>3</experiments>
</comment>
<comment type="interaction">
    <interactant intactId="EBI-726739">
        <id>Q9UPY8</id>
    </interactant>
    <interactant intactId="EBI-10829018">
        <id>Q04864-2</id>
        <label>REL</label>
    </interactant>
    <organismsDiffer>false</organismsDiffer>
    <experiments>3</experiments>
</comment>
<comment type="interaction">
    <interactant intactId="EBI-726739">
        <id>Q9UPY8</id>
    </interactant>
    <interactant intactId="EBI-727004">
        <id>O00560</id>
        <label>SDCBP</label>
    </interactant>
    <organismsDiffer>false</organismsDiffer>
    <experiments>6</experiments>
</comment>
<comment type="interaction">
    <interactant intactId="EBI-726739">
        <id>Q9UPY8</id>
    </interactant>
    <interactant intactId="EBI-11522811">
        <id>Q8IUQ4-2</id>
        <label>SIAH1</label>
    </interactant>
    <organismsDiffer>false</organismsDiffer>
    <experiments>3</experiments>
</comment>
<comment type="interaction">
    <interactant intactId="EBI-726739">
        <id>Q9UPY8</id>
    </interactant>
    <interactant intactId="EBI-11960469">
        <id>P0CI01</id>
        <label>SPDYE6</label>
    </interactant>
    <organismsDiffer>false</organismsDiffer>
    <experiments>3</experiments>
</comment>
<comment type="interaction">
    <interactant intactId="EBI-726739">
        <id>Q9UPY8</id>
    </interactant>
    <interactant intactId="EBI-18115728">
        <id>Q6ZNM6</id>
        <label>SPMIP10</label>
    </interactant>
    <organismsDiffer>false</organismsDiffer>
    <experiments>3</experiments>
</comment>
<comment type="interaction">
    <interactant intactId="EBI-726739">
        <id>Q9UPY8</id>
    </interactant>
    <interactant intactId="EBI-12020542">
        <id>Q96LM5</id>
        <label>SPMIP2</label>
    </interactant>
    <organismsDiffer>false</organismsDiffer>
    <experiments>3</experiments>
</comment>
<comment type="interaction">
    <interactant intactId="EBI-726739">
        <id>Q9UPY8</id>
    </interactant>
    <interactant intactId="EBI-352832">
        <id>Q9UL54</id>
        <label>TAOK2</label>
    </interactant>
    <organismsDiffer>false</organismsDiffer>
    <experiments>3</experiments>
</comment>
<comment type="interaction">
    <interactant intactId="EBI-726739">
        <id>Q9UPY8</id>
    </interactant>
    <interactant intactId="EBI-11741437">
        <id>Q08117-2</id>
        <label>TLE5</label>
    </interactant>
    <organismsDiffer>false</organismsDiffer>
    <experiments>3</experiments>
</comment>
<comment type="interaction">
    <interactant intactId="EBI-726739">
        <id>Q9UPY8</id>
    </interactant>
    <interactant intactId="EBI-1756205">
        <id>Q9BWF2</id>
        <label>TRAIP</label>
    </interactant>
    <organismsDiffer>false</organismsDiffer>
    <experiments>3</experiments>
</comment>
<comment type="interaction">
    <interactant intactId="EBI-726739">
        <id>Q9UPY8</id>
    </interactant>
    <interactant intactId="EBI-2820256">
        <id>Q14142</id>
        <label>TRIM14</label>
    </interactant>
    <organismsDiffer>false</organismsDiffer>
    <experiments>3</experiments>
</comment>
<comment type="interaction">
    <interactant intactId="EBI-726739">
        <id>Q9UPY8</id>
    </interactant>
    <interactant intactId="EBI-2349743">
        <id>Q12815</id>
        <label>TROAP</label>
    </interactant>
    <organismsDiffer>false</organismsDiffer>
    <experiments>8</experiments>
</comment>
<comment type="interaction">
    <interactant intactId="EBI-726739">
        <id>Q9UPY8</id>
    </interactant>
    <interactant intactId="EBI-2932492">
        <id>Q99757</id>
        <label>TXN2</label>
    </interactant>
    <organismsDiffer>false</organismsDiffer>
    <experiments>6</experiments>
</comment>
<comment type="interaction">
    <interactant intactId="EBI-726739">
        <id>Q9UPY8</id>
    </interactant>
    <interactant intactId="EBI-12111538">
        <id>Q8IY57-5</id>
        <label>YAF2</label>
    </interactant>
    <organismsDiffer>false</organismsDiffer>
    <experiments>3</experiments>
</comment>
<comment type="interaction">
    <interactant intactId="EBI-726739">
        <id>Q9UPY8</id>
    </interactant>
    <interactant intactId="EBI-5458880">
        <id>Q96GY0</id>
        <label>ZC2HC1A</label>
    </interactant>
    <organismsDiffer>false</organismsDiffer>
    <experiments>3</experiments>
</comment>
<comment type="interaction">
    <interactant intactId="EBI-726739">
        <id>Q9UPY8</id>
    </interactant>
    <interactant intactId="EBI-14104088">
        <id>Q53FD0-2</id>
        <label>ZC2HC1C</label>
    </interactant>
    <organismsDiffer>false</organismsDiffer>
    <experiments>3</experiments>
</comment>
<comment type="interaction">
    <interactant intactId="EBI-726739">
        <id>Q9UPY8</id>
    </interactant>
    <interactant intactId="EBI-11035148">
        <id>Q8TF50</id>
        <label>ZNF526</label>
    </interactant>
    <organismsDiffer>false</organismsDiffer>
    <experiments>3</experiments>
</comment>
<comment type="interaction">
    <interactant intactId="EBI-726739">
        <id>Q9UPY8</id>
    </interactant>
    <interactant intactId="EBI-12895421">
        <id>Q8IVP9</id>
        <label>ZNF547</label>
    </interactant>
    <organismsDiffer>false</organismsDiffer>
    <experiments>3</experiments>
</comment>
<comment type="interaction">
    <interactant intactId="EBI-726739">
        <id>Q9UPY8</id>
    </interactant>
    <interactant intactId="EBI-764653">
        <id>P14873</id>
        <label>Map1b</label>
    </interactant>
    <organismsDiffer>true</organismsDiffer>
    <experiments>4</experiments>
</comment>
<comment type="interaction">
    <interactant intactId="EBI-726739">
        <id>Q9UPY8</id>
    </interactant>
    <interactant intactId="EBI-775607">
        <id>Q9QWI6-2</id>
        <label>Srcin1</label>
    </interactant>
    <organismsDiffer>true</organismsDiffer>
    <experiments>5</experiments>
</comment>
<comment type="subcellular location">
    <subcellularLocation>
        <location evidence="6 10 13">Cytoplasm</location>
        <location evidence="6 10 13">Cytoskeleton</location>
    </subcellularLocation>
    <text evidence="6 10 13">Associated with the microtubule network. Detected at the plus end of microtubules.</text>
</comment>
<comment type="alternative products">
    <event type="alternative splicing"/>
    <isoform>
        <id>Q9UPY8-1</id>
        <name>1</name>
        <name>EBF3-L</name>
        <sequence type="displayed"/>
    </isoform>
    <isoform>
        <id>Q9UPY8-2</id>
        <name>2</name>
        <name>EBF3-S</name>
        <sequence type="described" ref="VSP_012947"/>
    </isoform>
</comment>
<comment type="tissue specificity">
    <text evidence="6">Predominantly expressed in brain and muscle.</text>
</comment>
<comment type="domain">
    <text evidence="7">Composed of two functionally independent domains. The N-terminal domain forms a hydrophobic cleft involved in microtubule binding and the C-terminal is involved in the formation of mutually exclusive complexes with APC and DCTN1.</text>
</comment>
<comment type="similarity">
    <text evidence="16">Belongs to the MAPRE family.</text>
</comment>
<comment type="sequence caution" evidence="16">
    <conflict type="erroneous initiation">
        <sequence resource="EMBL-CDS" id="AAK07556"/>
    </conflict>
</comment>
<comment type="sequence caution" evidence="16">
    <conflict type="erroneous initiation">
        <sequence resource="EMBL-CDS" id="AAK07557"/>
    </conflict>
</comment>
<comment type="sequence caution" evidence="16">
    <conflict type="frameshift">
        <sequence resource="EMBL-CDS" id="CAA72060"/>
    </conflict>
</comment>